<comment type="function">
    <text evidence="1">May be involved in transcriptional regulation. Is required for the differentiation of KISS1-expressing neurons in the arcuate (Arc) nucleus of the hypothalamus. Is a critical regulator of GABAergic cell fate in the cerebellum, required for normal postnatal cerebellar development (By similarity).</text>
</comment>
<comment type="subcellular location">
    <subcellularLocation>
        <location evidence="7">Nucleus</location>
    </subcellularLocation>
</comment>
<comment type="tissue specificity">
    <text evidence="6">In the embryo, expressed in neural stem cells of the hindbrain.</text>
</comment>
<comment type="developmental stage">
    <text evidence="5">Prominent expression detected in the developing hypothalamus and cerebellar primordium at Carnegie stage 23.</text>
</comment>
<comment type="disease" evidence="5">
    <disease id="DI-06352">
        <name>Cerebellar dysfunction, impaired intellectual development, and hypogonadotropic hypogonadism</name>
        <acronym>CDIDHH</acronym>
        <description>An autosomal recessive disorder characterized by delayed motor development, ataxia with cerebellar hypoplasia, severe progressive scoliosis, moderate to severe intellectual disability, and delayed puberty with congenital hypogonadotropic hypogonadism.</description>
        <dbReference type="MIM" id="619761"/>
    </disease>
    <text>The disease is caused by variants affecting the gene represented in this entry.</text>
</comment>
<comment type="disease" evidence="6">
    <disease id="DI-06442">
        <name>Pontocerebellar hypoplasia 17</name>
        <acronym>PCH17</acronym>
        <description>A form of pontocerebellar hypoplasia, a disorder characterized by structural defects of the pons and cerebellum, evident upon brain imaging. PCH17 is an autosomal recessive, severe form clinically characterized by neonatal hypotonia, feeding and respiratory difficulties, central apnea, and bradycardia. Most affected individuals die in infancy. Brain imaging shows cerebellar and brainstem hypoplasia.</description>
        <dbReference type="MIM" id="619909"/>
    </disease>
    <text>The disease is caused by variants affecting the gene represented in this entry.</text>
</comment>
<comment type="similarity">
    <text evidence="3">Belongs to the class V-like SAM-binding methyltransferase superfamily.</text>
</comment>
<comment type="sequence caution" evidence="7">
    <conflict type="miscellaneous discrepancy">
        <sequence resource="EMBL-CDS" id="AAG13448"/>
    </conflict>
    <text>Non-canonical splice intron-exon junction.</text>
</comment>
<dbReference type="EC" id="2.1.1.-"/>
<dbReference type="EMBL" id="AY004253">
    <property type="protein sequence ID" value="AAG13448.1"/>
    <property type="status" value="ALT_SEQ"/>
    <property type="molecule type" value="mRNA"/>
</dbReference>
<dbReference type="EMBL" id="AL035087">
    <property type="status" value="NOT_ANNOTATED_CDS"/>
    <property type="molecule type" value="Genomic_DNA"/>
</dbReference>
<dbReference type="EMBL" id="AL137784">
    <property type="status" value="NOT_ANNOTATED_CDS"/>
    <property type="molecule type" value="Genomic_DNA"/>
</dbReference>
<dbReference type="EMBL" id="CH471051">
    <property type="protein sequence ID" value="EAW48462.1"/>
    <property type="molecule type" value="Genomic_DNA"/>
</dbReference>
<dbReference type="CCDS" id="CCDS43487.1"/>
<dbReference type="RefSeq" id="NP_067633.2">
    <property type="nucleotide sequence ID" value="NM_021620.4"/>
</dbReference>
<dbReference type="SMR" id="Q9H4Q3"/>
<dbReference type="BioGRID" id="121879">
    <property type="interactions" value="10"/>
</dbReference>
<dbReference type="FunCoup" id="Q9H4Q3">
    <property type="interactions" value="277"/>
</dbReference>
<dbReference type="IntAct" id="Q9H4Q3">
    <property type="interactions" value="8"/>
</dbReference>
<dbReference type="MINT" id="Q9H4Q3"/>
<dbReference type="STRING" id="9606.ENSP00000358217"/>
<dbReference type="ChEMBL" id="CHEMBL5214859"/>
<dbReference type="GlyGen" id="Q9H4Q3">
    <property type="glycosylation" value="1 site"/>
</dbReference>
<dbReference type="iPTMnet" id="Q9H4Q3"/>
<dbReference type="PhosphoSitePlus" id="Q9H4Q3"/>
<dbReference type="BioMuta" id="PRDM13"/>
<dbReference type="DMDM" id="317373271"/>
<dbReference type="MassIVE" id="Q9H4Q3"/>
<dbReference type="PaxDb" id="9606-ENSP00000358217"/>
<dbReference type="PeptideAtlas" id="Q9H4Q3"/>
<dbReference type="ProteomicsDB" id="80871"/>
<dbReference type="Antibodypedia" id="7968">
    <property type="antibodies" value="117 antibodies from 17 providers"/>
</dbReference>
<dbReference type="DNASU" id="59336"/>
<dbReference type="Ensembl" id="ENST00000369215.5">
    <property type="protein sequence ID" value="ENSP00000358217.5"/>
    <property type="gene ID" value="ENSG00000112238.12"/>
</dbReference>
<dbReference type="GeneID" id="59336"/>
<dbReference type="KEGG" id="hsa:59336"/>
<dbReference type="MANE-Select" id="ENST00000369215.5">
    <property type="protein sequence ID" value="ENSP00000358217.5"/>
    <property type="RefSeq nucleotide sequence ID" value="NM_021620.4"/>
    <property type="RefSeq protein sequence ID" value="NP_067633.2"/>
</dbReference>
<dbReference type="UCSC" id="uc003pqg.2">
    <property type="organism name" value="human"/>
</dbReference>
<dbReference type="AGR" id="HGNC:13998"/>
<dbReference type="CTD" id="59336"/>
<dbReference type="DisGeNET" id="59336"/>
<dbReference type="GeneCards" id="PRDM13"/>
<dbReference type="HGNC" id="HGNC:13998">
    <property type="gene designation" value="PRDM13"/>
</dbReference>
<dbReference type="HPA" id="ENSG00000112238">
    <property type="expression patterns" value="Not detected"/>
</dbReference>
<dbReference type="MalaCards" id="PRDM13"/>
<dbReference type="MIM" id="616741">
    <property type="type" value="gene"/>
</dbReference>
<dbReference type="MIM" id="619761">
    <property type="type" value="phenotype"/>
</dbReference>
<dbReference type="MIM" id="619909">
    <property type="type" value="phenotype"/>
</dbReference>
<dbReference type="neXtProt" id="NX_Q9H4Q3"/>
<dbReference type="OpenTargets" id="ENSG00000112238"/>
<dbReference type="PharmGKB" id="PA33711"/>
<dbReference type="VEuPathDB" id="HostDB:ENSG00000112238"/>
<dbReference type="eggNOG" id="KOG1721">
    <property type="taxonomic scope" value="Eukaryota"/>
</dbReference>
<dbReference type="GeneTree" id="ENSGT00940000160200"/>
<dbReference type="HOGENOM" id="CLU_441855_0_0_1"/>
<dbReference type="InParanoid" id="Q9H4Q3"/>
<dbReference type="OMA" id="REIAMHN"/>
<dbReference type="OrthoDB" id="9998363at2759"/>
<dbReference type="PAN-GO" id="Q9H4Q3">
    <property type="GO annotations" value="2 GO annotations based on evolutionary models"/>
</dbReference>
<dbReference type="PhylomeDB" id="Q9H4Q3"/>
<dbReference type="TreeFam" id="TF106398"/>
<dbReference type="PathwayCommons" id="Q9H4Q3"/>
<dbReference type="SignaLink" id="Q9H4Q3"/>
<dbReference type="BioGRID-ORCS" id="59336">
    <property type="hits" value="15 hits in 1171 CRISPR screens"/>
</dbReference>
<dbReference type="GenomeRNAi" id="59336"/>
<dbReference type="Pharos" id="Q9H4Q3">
    <property type="development level" value="Tbio"/>
</dbReference>
<dbReference type="PRO" id="PR:Q9H4Q3"/>
<dbReference type="Proteomes" id="UP000005640">
    <property type="component" value="Chromosome 6"/>
</dbReference>
<dbReference type="RNAct" id="Q9H4Q3">
    <property type="molecule type" value="protein"/>
</dbReference>
<dbReference type="Bgee" id="ENSG00000112238">
    <property type="expression patterns" value="Expressed in male germ line stem cell (sensu Vertebrata) in testis and 3 other cell types or tissues"/>
</dbReference>
<dbReference type="ExpressionAtlas" id="Q9H4Q3">
    <property type="expression patterns" value="baseline and differential"/>
</dbReference>
<dbReference type="GO" id="GO:0005634">
    <property type="term" value="C:nucleus"/>
    <property type="evidence" value="ECO:0000250"/>
    <property type="project" value="UniProtKB"/>
</dbReference>
<dbReference type="GO" id="GO:0003682">
    <property type="term" value="F:chromatin binding"/>
    <property type="evidence" value="ECO:0007669"/>
    <property type="project" value="Ensembl"/>
</dbReference>
<dbReference type="GO" id="GO:0003677">
    <property type="term" value="F:DNA binding"/>
    <property type="evidence" value="ECO:0007669"/>
    <property type="project" value="UniProtKB-KW"/>
</dbReference>
<dbReference type="GO" id="GO:0042054">
    <property type="term" value="F:histone methyltransferase activity"/>
    <property type="evidence" value="ECO:0000250"/>
    <property type="project" value="UniProtKB"/>
</dbReference>
<dbReference type="GO" id="GO:0061629">
    <property type="term" value="F:RNA polymerase II-specific DNA-binding transcription factor binding"/>
    <property type="evidence" value="ECO:0007669"/>
    <property type="project" value="Ensembl"/>
</dbReference>
<dbReference type="GO" id="GO:0008270">
    <property type="term" value="F:zinc ion binding"/>
    <property type="evidence" value="ECO:0007669"/>
    <property type="project" value="UniProtKB-KW"/>
</dbReference>
<dbReference type="GO" id="GO:0097154">
    <property type="term" value="P:GABAergic neuron differentiation"/>
    <property type="evidence" value="ECO:0007669"/>
    <property type="project" value="Ensembl"/>
</dbReference>
<dbReference type="GO" id="GO:0021979">
    <property type="term" value="P:hypothalamus cell differentiation"/>
    <property type="evidence" value="ECO:0007669"/>
    <property type="project" value="Ensembl"/>
</dbReference>
<dbReference type="GO" id="GO:0032259">
    <property type="term" value="P:methylation"/>
    <property type="evidence" value="ECO:0007669"/>
    <property type="project" value="UniProtKB-KW"/>
</dbReference>
<dbReference type="GO" id="GO:0000122">
    <property type="term" value="P:negative regulation of transcription by RNA polymerase II"/>
    <property type="evidence" value="ECO:0007669"/>
    <property type="project" value="Ensembl"/>
</dbReference>
<dbReference type="GO" id="GO:0010468">
    <property type="term" value="P:regulation of gene expression"/>
    <property type="evidence" value="ECO:0000318"/>
    <property type="project" value="GO_Central"/>
</dbReference>
<dbReference type="CDD" id="cd19197">
    <property type="entry name" value="PR-SET_PRDM13"/>
    <property type="match status" value="1"/>
</dbReference>
<dbReference type="FunFam" id="2.170.270.10:FF:000027">
    <property type="entry name" value="PR domain zinc finger protein 13"/>
    <property type="match status" value="1"/>
</dbReference>
<dbReference type="FunFam" id="3.30.160.60:FF:000616">
    <property type="entry name" value="PR domain zinc finger protein 13"/>
    <property type="match status" value="1"/>
</dbReference>
<dbReference type="FunFam" id="3.30.160.60:FF:000743">
    <property type="entry name" value="PR domain zinc finger protein 13"/>
    <property type="match status" value="1"/>
</dbReference>
<dbReference type="Gene3D" id="3.30.160.60">
    <property type="entry name" value="Classic Zinc Finger"/>
    <property type="match status" value="2"/>
</dbReference>
<dbReference type="Gene3D" id="2.170.270.10">
    <property type="entry name" value="SET domain"/>
    <property type="match status" value="1"/>
</dbReference>
<dbReference type="InterPro" id="IPR044407">
    <property type="entry name" value="PRDM13_PR/SET"/>
</dbReference>
<dbReference type="InterPro" id="IPR001214">
    <property type="entry name" value="SET_dom"/>
</dbReference>
<dbReference type="InterPro" id="IPR046341">
    <property type="entry name" value="SET_dom_sf"/>
</dbReference>
<dbReference type="InterPro" id="IPR050331">
    <property type="entry name" value="Zinc_finger"/>
</dbReference>
<dbReference type="InterPro" id="IPR036236">
    <property type="entry name" value="Znf_C2H2_sf"/>
</dbReference>
<dbReference type="InterPro" id="IPR013087">
    <property type="entry name" value="Znf_C2H2_type"/>
</dbReference>
<dbReference type="PANTHER" id="PTHR16515">
    <property type="entry name" value="PR DOMAIN ZINC FINGER PROTEIN"/>
    <property type="match status" value="1"/>
</dbReference>
<dbReference type="PANTHER" id="PTHR16515:SF21">
    <property type="entry name" value="PR DOMAIN ZINC FINGER PROTEIN 13"/>
    <property type="match status" value="1"/>
</dbReference>
<dbReference type="Pfam" id="PF21549">
    <property type="entry name" value="PRDM2_PR"/>
    <property type="match status" value="1"/>
</dbReference>
<dbReference type="Pfam" id="PF00096">
    <property type="entry name" value="zf-C2H2"/>
    <property type="match status" value="4"/>
</dbReference>
<dbReference type="SMART" id="SM00355">
    <property type="entry name" value="ZnF_C2H2"/>
    <property type="match status" value="4"/>
</dbReference>
<dbReference type="SUPFAM" id="SSF57667">
    <property type="entry name" value="beta-beta-alpha zinc fingers"/>
    <property type="match status" value="3"/>
</dbReference>
<dbReference type="SUPFAM" id="SSF82199">
    <property type="entry name" value="SET domain"/>
    <property type="match status" value="1"/>
</dbReference>
<dbReference type="PROSITE" id="PS50280">
    <property type="entry name" value="SET"/>
    <property type="match status" value="1"/>
</dbReference>
<dbReference type="PROSITE" id="PS00028">
    <property type="entry name" value="ZINC_FINGER_C2H2_1"/>
    <property type="match status" value="4"/>
</dbReference>
<dbReference type="PROSITE" id="PS50157">
    <property type="entry name" value="ZINC_FINGER_C2H2_2"/>
    <property type="match status" value="4"/>
</dbReference>
<sequence>MHGAARAPATSVSADCCIPAGLRLGPVPGTFKLGKYLSDRREPGPKKKVRMVRGELVDESGGSPLEWIGLIRAARNSQEQTLEAIADLPGGQIFYRALRDVQPGEELTVWYSNSLAQWFDIPTTATPTHDEKGEERYICWYCWRTFRYPNSLKAHLRFHCVFSGGGGGAFLHHEHAARQGAVPAADGLGLSPKPPAPDFAAPSQAGTLRPHPLGPPPVQACGAREGIKREASSAPSATSPTPGKWGQPKKGKEQLDRALDMSGAARGQGHFLGIVGGSSAGVGSLAFYPGVRSAFKPAGLARAAAAAHGDPYREESSSKQGAGLALGRLLGGGRACGRPGSGENSAAGGAGHHHHHHAHHHHHPKCLLAGDPPPPPPPGLPCSGALRGFPLLSVPPEEASAFKHVERAPPAAAALPGARYAQLPPAPGLPLERCALPPLDPGGLKAYPGGECSHLPAVMPAFTVYNGELLYGSPATTAYYPLKLHFGGLLKYPESISYFSGPAAAALSPAELGSLASIDREIAMHNQQLSEMAAGKGRGRLDSGTLPPAVAAAGGTGGGGSGGSGAGKPKTGHLCLYCGKLYSRKYGLKIHMRTHTGYKPLKCKVCLRPFGDPSNLNKHIRLHAEGNTPYRCEFCGKVLVRRRDLERHVKSRHPGQSLLAKAGDGPGAEPGYPPEPGDPKSDDSDVDVCFTDDQSDPEVGGGGERDL</sequence>
<proteinExistence type="evidence at protein level"/>
<gene>
    <name type="primary">PRDM13</name>
    <name type="synonym">PFM10</name>
</gene>
<protein>
    <recommendedName>
        <fullName>PR domain zinc finger protein 13</fullName>
        <ecNumber>2.1.1.-</ecNumber>
    </recommendedName>
    <alternativeName>
        <fullName>PR domain-containing protein 13</fullName>
    </alternativeName>
</protein>
<organism>
    <name type="scientific">Homo sapiens</name>
    <name type="common">Human</name>
    <dbReference type="NCBI Taxonomy" id="9606"/>
    <lineage>
        <taxon>Eukaryota</taxon>
        <taxon>Metazoa</taxon>
        <taxon>Chordata</taxon>
        <taxon>Craniata</taxon>
        <taxon>Vertebrata</taxon>
        <taxon>Euteleostomi</taxon>
        <taxon>Mammalia</taxon>
        <taxon>Eutheria</taxon>
        <taxon>Euarchontoglires</taxon>
        <taxon>Primates</taxon>
        <taxon>Haplorrhini</taxon>
        <taxon>Catarrhini</taxon>
        <taxon>Hominidae</taxon>
        <taxon>Homo</taxon>
    </lineage>
</organism>
<evidence type="ECO:0000250" key="1">
    <source>
        <dbReference type="UniProtKB" id="E9PZZ1"/>
    </source>
</evidence>
<evidence type="ECO:0000255" key="2">
    <source>
        <dbReference type="PROSITE-ProRule" id="PRU00042"/>
    </source>
</evidence>
<evidence type="ECO:0000255" key="3">
    <source>
        <dbReference type="PROSITE-ProRule" id="PRU00190"/>
    </source>
</evidence>
<evidence type="ECO:0000256" key="4">
    <source>
        <dbReference type="SAM" id="MobiDB-lite"/>
    </source>
</evidence>
<evidence type="ECO:0000269" key="5">
    <source>
    </source>
</evidence>
<evidence type="ECO:0000269" key="6">
    <source>
    </source>
</evidence>
<evidence type="ECO:0000305" key="7"/>
<feature type="chain" id="PRO_0000047770" description="PR domain zinc finger protein 13">
    <location>
        <begin position="1"/>
        <end position="707"/>
    </location>
</feature>
<feature type="domain" description="SET" evidence="3">
    <location>
        <begin position="1"/>
        <end position="112"/>
    </location>
</feature>
<feature type="zinc finger region" description="C2H2-type 1" evidence="2">
    <location>
        <begin position="137"/>
        <end position="159"/>
    </location>
</feature>
<feature type="zinc finger region" description="C2H2-type 2" evidence="2">
    <location>
        <begin position="573"/>
        <end position="595"/>
    </location>
</feature>
<feature type="zinc finger region" description="C2H2-type 3" evidence="2">
    <location>
        <begin position="601"/>
        <end position="623"/>
    </location>
</feature>
<feature type="zinc finger region" description="C2H2-type 4" evidence="2">
    <location>
        <begin position="630"/>
        <end position="653"/>
    </location>
</feature>
<feature type="region of interest" description="Disordered" evidence="4">
    <location>
        <begin position="184"/>
        <end position="213"/>
    </location>
</feature>
<feature type="region of interest" description="Disordered" evidence="4">
    <location>
        <begin position="226"/>
        <end position="255"/>
    </location>
</feature>
<feature type="region of interest" description="Disordered" evidence="4">
    <location>
        <begin position="336"/>
        <end position="372"/>
    </location>
</feature>
<feature type="region of interest" description="Disordered" evidence="4">
    <location>
        <begin position="545"/>
        <end position="567"/>
    </location>
</feature>
<feature type="region of interest" description="Disordered" evidence="4">
    <location>
        <begin position="647"/>
        <end position="707"/>
    </location>
</feature>
<feature type="compositionally biased region" description="Low complexity" evidence="4">
    <location>
        <begin position="232"/>
        <end position="242"/>
    </location>
</feature>
<feature type="compositionally biased region" description="Basic residues" evidence="4">
    <location>
        <begin position="351"/>
        <end position="365"/>
    </location>
</feature>
<feature type="compositionally biased region" description="Gly residues" evidence="4">
    <location>
        <begin position="554"/>
        <end position="566"/>
    </location>
</feature>
<feature type="sequence variant" id="VAR_087006" description="In PCH17; uncertain significance; dbSNP:rs1173266789." evidence="6">
    <original>H</original>
    <variation>L</variation>
    <location>
        <position position="619"/>
    </location>
</feature>
<reference key="1">
    <citation type="submission" date="2000-07" db="EMBL/GenBank/DDBJ databases">
        <title>A family of novel PR-domain (PRDM) genes as candidate tumor suppressors.</title>
        <authorList>
            <person name="Yang X.-H."/>
            <person name="Huang S."/>
        </authorList>
    </citation>
    <scope>NUCLEOTIDE SEQUENCE [MRNA]</scope>
</reference>
<reference key="2">
    <citation type="journal article" date="2003" name="Nature">
        <title>The DNA sequence and analysis of human chromosome 6.</title>
        <authorList>
            <person name="Mungall A.J."/>
            <person name="Palmer S.A."/>
            <person name="Sims S.K."/>
            <person name="Edwards C.A."/>
            <person name="Ashurst J.L."/>
            <person name="Wilming L."/>
            <person name="Jones M.C."/>
            <person name="Horton R."/>
            <person name="Hunt S.E."/>
            <person name="Scott C.E."/>
            <person name="Gilbert J.G.R."/>
            <person name="Clamp M.E."/>
            <person name="Bethel G."/>
            <person name="Milne S."/>
            <person name="Ainscough R."/>
            <person name="Almeida J.P."/>
            <person name="Ambrose K.D."/>
            <person name="Andrews T.D."/>
            <person name="Ashwell R.I.S."/>
            <person name="Babbage A.K."/>
            <person name="Bagguley C.L."/>
            <person name="Bailey J."/>
            <person name="Banerjee R."/>
            <person name="Barker D.J."/>
            <person name="Barlow K.F."/>
            <person name="Bates K."/>
            <person name="Beare D.M."/>
            <person name="Beasley H."/>
            <person name="Beasley O."/>
            <person name="Bird C.P."/>
            <person name="Blakey S.E."/>
            <person name="Bray-Allen S."/>
            <person name="Brook J."/>
            <person name="Brown A.J."/>
            <person name="Brown J.Y."/>
            <person name="Burford D.C."/>
            <person name="Burrill W."/>
            <person name="Burton J."/>
            <person name="Carder C."/>
            <person name="Carter N.P."/>
            <person name="Chapman J.C."/>
            <person name="Clark S.Y."/>
            <person name="Clark G."/>
            <person name="Clee C.M."/>
            <person name="Clegg S."/>
            <person name="Cobley V."/>
            <person name="Collier R.E."/>
            <person name="Collins J.E."/>
            <person name="Colman L.K."/>
            <person name="Corby N.R."/>
            <person name="Coville G.J."/>
            <person name="Culley K.M."/>
            <person name="Dhami P."/>
            <person name="Davies J."/>
            <person name="Dunn M."/>
            <person name="Earthrowl M.E."/>
            <person name="Ellington A.E."/>
            <person name="Evans K.A."/>
            <person name="Faulkner L."/>
            <person name="Francis M.D."/>
            <person name="Frankish A."/>
            <person name="Frankland J."/>
            <person name="French L."/>
            <person name="Garner P."/>
            <person name="Garnett J."/>
            <person name="Ghori M.J."/>
            <person name="Gilby L.M."/>
            <person name="Gillson C.J."/>
            <person name="Glithero R.J."/>
            <person name="Grafham D.V."/>
            <person name="Grant M."/>
            <person name="Gribble S."/>
            <person name="Griffiths C."/>
            <person name="Griffiths M.N.D."/>
            <person name="Hall R."/>
            <person name="Halls K.S."/>
            <person name="Hammond S."/>
            <person name="Harley J.L."/>
            <person name="Hart E.A."/>
            <person name="Heath P.D."/>
            <person name="Heathcott R."/>
            <person name="Holmes S.J."/>
            <person name="Howden P.J."/>
            <person name="Howe K.L."/>
            <person name="Howell G.R."/>
            <person name="Huckle E."/>
            <person name="Humphray S.J."/>
            <person name="Humphries M.D."/>
            <person name="Hunt A.R."/>
            <person name="Johnson C.M."/>
            <person name="Joy A.A."/>
            <person name="Kay M."/>
            <person name="Keenan S.J."/>
            <person name="Kimberley A.M."/>
            <person name="King A."/>
            <person name="Laird G.K."/>
            <person name="Langford C."/>
            <person name="Lawlor S."/>
            <person name="Leongamornlert D.A."/>
            <person name="Leversha M."/>
            <person name="Lloyd C.R."/>
            <person name="Lloyd D.M."/>
            <person name="Loveland J.E."/>
            <person name="Lovell J."/>
            <person name="Martin S."/>
            <person name="Mashreghi-Mohammadi M."/>
            <person name="Maslen G.L."/>
            <person name="Matthews L."/>
            <person name="McCann O.T."/>
            <person name="McLaren S.J."/>
            <person name="McLay K."/>
            <person name="McMurray A."/>
            <person name="Moore M.J.F."/>
            <person name="Mullikin J.C."/>
            <person name="Niblett D."/>
            <person name="Nickerson T."/>
            <person name="Novik K.L."/>
            <person name="Oliver K."/>
            <person name="Overton-Larty E.K."/>
            <person name="Parker A."/>
            <person name="Patel R."/>
            <person name="Pearce A.V."/>
            <person name="Peck A.I."/>
            <person name="Phillimore B.J.C.T."/>
            <person name="Phillips S."/>
            <person name="Plumb R.W."/>
            <person name="Porter K.M."/>
            <person name="Ramsey Y."/>
            <person name="Ranby S.A."/>
            <person name="Rice C.M."/>
            <person name="Ross M.T."/>
            <person name="Searle S.M."/>
            <person name="Sehra H.K."/>
            <person name="Sheridan E."/>
            <person name="Skuce C.D."/>
            <person name="Smith S."/>
            <person name="Smith M."/>
            <person name="Spraggon L."/>
            <person name="Squares S.L."/>
            <person name="Steward C.A."/>
            <person name="Sycamore N."/>
            <person name="Tamlyn-Hall G."/>
            <person name="Tester J."/>
            <person name="Theaker A.J."/>
            <person name="Thomas D.W."/>
            <person name="Thorpe A."/>
            <person name="Tracey A."/>
            <person name="Tromans A."/>
            <person name="Tubby B."/>
            <person name="Wall M."/>
            <person name="Wallis J.M."/>
            <person name="West A.P."/>
            <person name="White S.S."/>
            <person name="Whitehead S.L."/>
            <person name="Whittaker H."/>
            <person name="Wild A."/>
            <person name="Willey D.J."/>
            <person name="Wilmer T.E."/>
            <person name="Wood J.M."/>
            <person name="Wray P.W."/>
            <person name="Wyatt J.C."/>
            <person name="Young L."/>
            <person name="Younger R.M."/>
            <person name="Bentley D.R."/>
            <person name="Coulson A."/>
            <person name="Durbin R.M."/>
            <person name="Hubbard T."/>
            <person name="Sulston J.E."/>
            <person name="Dunham I."/>
            <person name="Rogers J."/>
            <person name="Beck S."/>
        </authorList>
    </citation>
    <scope>NUCLEOTIDE SEQUENCE [LARGE SCALE GENOMIC DNA]</scope>
</reference>
<reference key="3">
    <citation type="submission" date="2005-09" db="EMBL/GenBank/DDBJ databases">
        <authorList>
            <person name="Mural R.J."/>
            <person name="Istrail S."/>
            <person name="Sutton G.G."/>
            <person name="Florea L."/>
            <person name="Halpern A.L."/>
            <person name="Mobarry C.M."/>
            <person name="Lippert R."/>
            <person name="Walenz B."/>
            <person name="Shatkay H."/>
            <person name="Dew I."/>
            <person name="Miller J.R."/>
            <person name="Flanigan M.J."/>
            <person name="Edwards N.J."/>
            <person name="Bolanos R."/>
            <person name="Fasulo D."/>
            <person name="Halldorsson B.V."/>
            <person name="Hannenhalli S."/>
            <person name="Turner R."/>
            <person name="Yooseph S."/>
            <person name="Lu F."/>
            <person name="Nusskern D.R."/>
            <person name="Shue B.C."/>
            <person name="Zheng X.H."/>
            <person name="Zhong F."/>
            <person name="Delcher A.L."/>
            <person name="Huson D.H."/>
            <person name="Kravitz S.A."/>
            <person name="Mouchard L."/>
            <person name="Reinert K."/>
            <person name="Remington K.A."/>
            <person name="Clark A.G."/>
            <person name="Waterman M.S."/>
            <person name="Eichler E.E."/>
            <person name="Adams M.D."/>
            <person name="Hunkapiller M.W."/>
            <person name="Myers E.W."/>
            <person name="Venter J.C."/>
        </authorList>
    </citation>
    <scope>NUCLEOTIDE SEQUENCE [LARGE SCALE GENOMIC DNA]</scope>
</reference>
<reference key="4">
    <citation type="journal article" date="2021" name="J. Clin. Invest.">
        <title>A recessive PRDM13 mutation results in congenital hypogonadotropic hypogonadism and cerebellar hypoplasia.</title>
        <authorList>
            <consortium name="GOSgene"/>
            <person name="Whittaker D.E."/>
            <person name="Oleari R."/>
            <person name="Gregory L.C."/>
            <person name="Le Quesne-Stabej P."/>
            <person name="Williams H.J."/>
            <person name="Torpiano J.G."/>
            <person name="Formosa N."/>
            <person name="Cachia M.J."/>
            <person name="Field D."/>
            <person name="Lettieri A."/>
            <person name="Ocaka L.A."/>
            <person name="Paganoni A.J."/>
            <person name="Rajabali S.H."/>
            <person name="Riegman K.L."/>
            <person name="De Martini L.B."/>
            <person name="Chaya T."/>
            <person name="Robinson I.C."/>
            <person name="Furukawa T."/>
            <person name="Cariboni A."/>
            <person name="Basson M.A."/>
            <person name="Dattani M.T."/>
        </authorList>
    </citation>
    <scope>DEVELOPMENTAL STAGE</scope>
    <scope>INVOLVEMENT IN CDIDHH</scope>
</reference>
<reference key="5">
    <citation type="journal article" date="2022" name="Am. J. Hum. Genet.">
        <title>Recessive PRDM13 mutations cause fatal perinatal brainstem dysfunction with cerebellar hypoplasia and disrupt Purkinje cell differentiation.</title>
        <authorList>
            <person name="Coolen M."/>
            <person name="Altin N."/>
            <person name="Rajamani K."/>
            <person name="Pereira E."/>
            <person name="Siquier-Pernet K."/>
            <person name="Puig Lombardi E."/>
            <person name="Moreno N."/>
            <person name="Barcia G."/>
            <person name="Yvert M."/>
            <person name="Laquerriere A."/>
            <person name="Pouliet A."/>
            <person name="Nitschke P."/>
            <person name="Boddaert N."/>
            <person name="Rausell A."/>
            <person name="Razavi F."/>
            <person name="Afenjar A."/>
            <person name="Billette de Villemeur T."/>
            <person name="Al-Maawali A."/>
            <person name="Al-Thihli K."/>
            <person name="Baptista J."/>
            <person name="Beleza-Meireles A."/>
            <person name="Garel C."/>
            <person name="Legendre M."/>
            <person name="Gelot A."/>
            <person name="Burglen L."/>
            <person name="Moutton S."/>
            <person name="Cantagrel V."/>
        </authorList>
    </citation>
    <scope>TISSUE SPECIFICITY</scope>
    <scope>INVOLVEMENT IN PCH17</scope>
    <scope>VARIANT PCH17 LEU-619</scope>
</reference>
<keyword id="KW-0238">DNA-binding</keyword>
<keyword id="KW-1016">Hypogonadotropic hypogonadism</keyword>
<keyword id="KW-0991">Intellectual disability</keyword>
<keyword id="KW-0479">Metal-binding</keyword>
<keyword id="KW-0489">Methyltransferase</keyword>
<keyword id="KW-0539">Nucleus</keyword>
<keyword id="KW-1267">Proteomics identification</keyword>
<keyword id="KW-1185">Reference proteome</keyword>
<keyword id="KW-0677">Repeat</keyword>
<keyword id="KW-0949">S-adenosyl-L-methionine</keyword>
<keyword id="KW-0804">Transcription</keyword>
<keyword id="KW-0805">Transcription regulation</keyword>
<keyword id="KW-0808">Transferase</keyword>
<keyword id="KW-0862">Zinc</keyword>
<keyword id="KW-0863">Zinc-finger</keyword>
<accession>Q9H4Q3</accession>
<accession>Q5TGC1</accession>
<accession>Q5TGC2</accession>
<name>PRD13_HUMAN</name>